<protein>
    <recommendedName>
        <fullName evidence="1">Isoleucine--tRNA ligase</fullName>
        <ecNumber evidence="1">6.1.1.5</ecNumber>
    </recommendedName>
    <alternativeName>
        <fullName evidence="1">Isoleucyl-tRNA synthetase</fullName>
        <shortName evidence="1">IleRS</shortName>
    </alternativeName>
</protein>
<sequence length="938" mass="104690">MSDYKNTLNLPETGFPMRGDLAKREPDMLKRWYEQDLYGIIRAAKKGKKTFILHDGPPYANGNIHIGHSVNKILKDIIVKSKGMAGYDSPYIPGWDCHGLPIELKVEQLIGKPGEKVSAAEFRTACRKYAAEQVEGQKKDFIRLGVLGDWDHPYLTMDFKTEANIIRALSKIIDNGHLHKGAKPVHWCTDCGSSLAEAEVEYYDKTSQSIDVRFNAVDTATVAAKFGVSAVNGPISLVIWTTTPWTLPANRAISLNAEYLYQLVQVEGECLILAADLVESVMKRAGITQWAVLGSCTGSDLELLRFTHPFMGFDVPAILGDHVTLDAGTGAVHTAPGHGPDDFVIGQKYGLEVANPVGPNGCYLAGTYPTLDGLFVFKANDVVVELLREKGALLHVEKLLHSYPCCWRHKTPIIFRATPQWFISMDQKGLRKQSLQEIKGVQWIPDWGQARIETMVANRPDWCISRQRTWGVPMSLFVHKETEQLHPRSIELMEEVAKRVEQDGIQAWWDLDPAEILGADAADYVKVPDTLDVWFDSGSTHSSVVDVRPEFGGHSPDMYLEGSDQHRGWFMSSLMIATAMKGKAPYRQVLTHGFTVDGQGRKMSKSIGNTISPQDVMNKLGGDILRLWVASTDYTGEIAVSDEILKRSADSYRRIRNTARFLLANLNGFDPAQHQVKPEEMVVVDRWAVGRAQAAQAEIMEAYENYDFHLVVQRLMQFCSVEMGSFYLDIIKDRQYTAKGDGIARRSCQTALFHIAEALVRWMAPIMSFTADEIWNHLPGERQQYVFTEEWYDGLFGLAGNESMNDTFWAELLKVRGEVNKVLEQARSDKRIGGSLEAAVTLYAEPELAARLNSLQDELRFVLLTSAAKVAAYADAGNDAQQSELIAGLKITFNKADGEKCPRCWHYTQDVGLVAEHAELCGRCVTNVAGDGEERKFA</sequence>
<comment type="function">
    <text evidence="1">Catalyzes the attachment of isoleucine to tRNA(Ile). As IleRS can inadvertently accommodate and process structurally similar amino acids such as valine, to avoid such errors it has two additional distinct tRNA(Ile)-dependent editing activities. One activity is designated as 'pretransfer' editing and involves the hydrolysis of activated Val-AMP. The other activity is designated 'posttransfer' editing and involves deacylation of mischarged Val-tRNA(Ile).</text>
</comment>
<comment type="catalytic activity">
    <reaction evidence="1">
        <text>tRNA(Ile) + L-isoleucine + ATP = L-isoleucyl-tRNA(Ile) + AMP + diphosphate</text>
        <dbReference type="Rhea" id="RHEA:11060"/>
        <dbReference type="Rhea" id="RHEA-COMP:9666"/>
        <dbReference type="Rhea" id="RHEA-COMP:9695"/>
        <dbReference type="ChEBI" id="CHEBI:30616"/>
        <dbReference type="ChEBI" id="CHEBI:33019"/>
        <dbReference type="ChEBI" id="CHEBI:58045"/>
        <dbReference type="ChEBI" id="CHEBI:78442"/>
        <dbReference type="ChEBI" id="CHEBI:78528"/>
        <dbReference type="ChEBI" id="CHEBI:456215"/>
        <dbReference type="EC" id="6.1.1.5"/>
    </reaction>
</comment>
<comment type="cofactor">
    <cofactor evidence="1">
        <name>Zn(2+)</name>
        <dbReference type="ChEBI" id="CHEBI:29105"/>
    </cofactor>
    <text evidence="1">Binds 1 zinc ion per subunit.</text>
</comment>
<comment type="subunit">
    <text evidence="1">Monomer.</text>
</comment>
<comment type="subcellular location">
    <subcellularLocation>
        <location evidence="1">Cytoplasm</location>
    </subcellularLocation>
</comment>
<comment type="domain">
    <text evidence="1">IleRS has two distinct active sites: one for aminoacylation and one for editing. The misactivated valine is translocated from the active site to the editing site, which sterically excludes the correctly activated isoleucine. The single editing site contains two valyl binding pockets, one specific for each substrate (Val-AMP or Val-tRNA(Ile)).</text>
</comment>
<comment type="similarity">
    <text evidence="1">Belongs to the class-I aminoacyl-tRNA synthetase family. IleS type 1 subfamily.</text>
</comment>
<keyword id="KW-0030">Aminoacyl-tRNA synthetase</keyword>
<keyword id="KW-0067">ATP-binding</keyword>
<keyword id="KW-0963">Cytoplasm</keyword>
<keyword id="KW-0436">Ligase</keyword>
<keyword id="KW-0479">Metal-binding</keyword>
<keyword id="KW-0547">Nucleotide-binding</keyword>
<keyword id="KW-0648">Protein biosynthesis</keyword>
<keyword id="KW-0862">Zinc</keyword>
<evidence type="ECO:0000255" key="1">
    <source>
        <dbReference type="HAMAP-Rule" id="MF_02002"/>
    </source>
</evidence>
<reference key="1">
    <citation type="submission" date="2007-02" db="EMBL/GenBank/DDBJ databases">
        <title>Complete sequence of chromosome of Yersinia pestis Pestoides F.</title>
        <authorList>
            <consortium name="US DOE Joint Genome Institute"/>
            <person name="Copeland A."/>
            <person name="Lucas S."/>
            <person name="Lapidus A."/>
            <person name="Barry K."/>
            <person name="Detter J.C."/>
            <person name="Glavina del Rio T."/>
            <person name="Hammon N."/>
            <person name="Israni S."/>
            <person name="Dalin E."/>
            <person name="Tice H."/>
            <person name="Pitluck S."/>
            <person name="Di Bartolo G."/>
            <person name="Chain P."/>
            <person name="Malfatti S."/>
            <person name="Shin M."/>
            <person name="Vergez L."/>
            <person name="Schmutz J."/>
            <person name="Larimer F."/>
            <person name="Land M."/>
            <person name="Hauser L."/>
            <person name="Worsham P."/>
            <person name="Chu M."/>
            <person name="Bearden S."/>
            <person name="Garcia E."/>
            <person name="Richardson P."/>
        </authorList>
    </citation>
    <scope>NUCLEOTIDE SEQUENCE [LARGE SCALE GENOMIC DNA]</scope>
    <source>
        <strain>Pestoides F</strain>
    </source>
</reference>
<feature type="chain" id="PRO_1000022146" description="Isoleucine--tRNA ligase">
    <location>
        <begin position="1"/>
        <end position="938"/>
    </location>
</feature>
<feature type="short sequence motif" description="'HIGH' region">
    <location>
        <begin position="58"/>
        <end position="68"/>
    </location>
</feature>
<feature type="short sequence motif" description="'KMSKS' region">
    <location>
        <begin position="602"/>
        <end position="606"/>
    </location>
</feature>
<feature type="binding site" evidence="1">
    <location>
        <position position="561"/>
    </location>
    <ligand>
        <name>L-isoleucyl-5'-AMP</name>
        <dbReference type="ChEBI" id="CHEBI:178002"/>
    </ligand>
</feature>
<feature type="binding site" evidence="1">
    <location>
        <position position="605"/>
    </location>
    <ligand>
        <name>ATP</name>
        <dbReference type="ChEBI" id="CHEBI:30616"/>
    </ligand>
</feature>
<feature type="binding site" evidence="1">
    <location>
        <position position="901"/>
    </location>
    <ligand>
        <name>Zn(2+)</name>
        <dbReference type="ChEBI" id="CHEBI:29105"/>
    </ligand>
</feature>
<feature type="binding site" evidence="1">
    <location>
        <position position="904"/>
    </location>
    <ligand>
        <name>Zn(2+)</name>
        <dbReference type="ChEBI" id="CHEBI:29105"/>
    </ligand>
</feature>
<feature type="binding site" evidence="1">
    <location>
        <position position="921"/>
    </location>
    <ligand>
        <name>Zn(2+)</name>
        <dbReference type="ChEBI" id="CHEBI:29105"/>
    </ligand>
</feature>
<feature type="binding site" evidence="1">
    <location>
        <position position="924"/>
    </location>
    <ligand>
        <name>Zn(2+)</name>
        <dbReference type="ChEBI" id="CHEBI:29105"/>
    </ligand>
</feature>
<accession>A4TQF3</accession>
<organism>
    <name type="scientific">Yersinia pestis (strain Pestoides F)</name>
    <dbReference type="NCBI Taxonomy" id="386656"/>
    <lineage>
        <taxon>Bacteria</taxon>
        <taxon>Pseudomonadati</taxon>
        <taxon>Pseudomonadota</taxon>
        <taxon>Gammaproteobacteria</taxon>
        <taxon>Enterobacterales</taxon>
        <taxon>Yersiniaceae</taxon>
        <taxon>Yersinia</taxon>
    </lineage>
</organism>
<name>SYI_YERPP</name>
<gene>
    <name evidence="1" type="primary">ileS</name>
    <name type="ordered locus">YPDSF_3157</name>
</gene>
<proteinExistence type="inferred from homology"/>
<dbReference type="EC" id="6.1.1.5" evidence="1"/>
<dbReference type="EMBL" id="CP000668">
    <property type="protein sequence ID" value="ABP41515.1"/>
    <property type="molecule type" value="Genomic_DNA"/>
</dbReference>
<dbReference type="RefSeq" id="WP_002210509.1">
    <property type="nucleotide sequence ID" value="NZ_CP009715.1"/>
</dbReference>
<dbReference type="SMR" id="A4TQF3"/>
<dbReference type="GeneID" id="57974135"/>
<dbReference type="KEGG" id="ypp:YPDSF_3157"/>
<dbReference type="PATRIC" id="fig|386656.14.peg.1194"/>
<dbReference type="GO" id="GO:0005829">
    <property type="term" value="C:cytosol"/>
    <property type="evidence" value="ECO:0007669"/>
    <property type="project" value="TreeGrafter"/>
</dbReference>
<dbReference type="GO" id="GO:0002161">
    <property type="term" value="F:aminoacyl-tRNA deacylase activity"/>
    <property type="evidence" value="ECO:0007669"/>
    <property type="project" value="InterPro"/>
</dbReference>
<dbReference type="GO" id="GO:0005524">
    <property type="term" value="F:ATP binding"/>
    <property type="evidence" value="ECO:0007669"/>
    <property type="project" value="UniProtKB-UniRule"/>
</dbReference>
<dbReference type="GO" id="GO:0004822">
    <property type="term" value="F:isoleucine-tRNA ligase activity"/>
    <property type="evidence" value="ECO:0007669"/>
    <property type="project" value="UniProtKB-UniRule"/>
</dbReference>
<dbReference type="GO" id="GO:0000049">
    <property type="term" value="F:tRNA binding"/>
    <property type="evidence" value="ECO:0007669"/>
    <property type="project" value="InterPro"/>
</dbReference>
<dbReference type="GO" id="GO:0008270">
    <property type="term" value="F:zinc ion binding"/>
    <property type="evidence" value="ECO:0007669"/>
    <property type="project" value="UniProtKB-UniRule"/>
</dbReference>
<dbReference type="GO" id="GO:0006428">
    <property type="term" value="P:isoleucyl-tRNA aminoacylation"/>
    <property type="evidence" value="ECO:0007669"/>
    <property type="project" value="UniProtKB-UniRule"/>
</dbReference>
<dbReference type="CDD" id="cd07960">
    <property type="entry name" value="Anticodon_Ia_Ile_BEm"/>
    <property type="match status" value="1"/>
</dbReference>
<dbReference type="CDD" id="cd00818">
    <property type="entry name" value="IleRS_core"/>
    <property type="match status" value="1"/>
</dbReference>
<dbReference type="FunFam" id="1.10.730.20:FF:000001">
    <property type="entry name" value="Isoleucine--tRNA ligase"/>
    <property type="match status" value="1"/>
</dbReference>
<dbReference type="FunFam" id="3.40.50.620:FF:000042">
    <property type="entry name" value="Isoleucine--tRNA ligase"/>
    <property type="match status" value="1"/>
</dbReference>
<dbReference type="FunFam" id="3.40.50.620:FF:000048">
    <property type="entry name" value="Isoleucine--tRNA ligase"/>
    <property type="match status" value="1"/>
</dbReference>
<dbReference type="FunFam" id="3.90.740.10:FF:000002">
    <property type="entry name" value="Isoleucine--tRNA ligase"/>
    <property type="match status" value="1"/>
</dbReference>
<dbReference type="Gene3D" id="1.10.730.20">
    <property type="match status" value="1"/>
</dbReference>
<dbReference type="Gene3D" id="3.40.50.620">
    <property type="entry name" value="HUPs"/>
    <property type="match status" value="2"/>
</dbReference>
<dbReference type="Gene3D" id="3.90.740.10">
    <property type="entry name" value="Valyl/Leucyl/Isoleucyl-tRNA synthetase, editing domain"/>
    <property type="match status" value="1"/>
</dbReference>
<dbReference type="HAMAP" id="MF_02002">
    <property type="entry name" value="Ile_tRNA_synth_type1"/>
    <property type="match status" value="1"/>
</dbReference>
<dbReference type="InterPro" id="IPR001412">
    <property type="entry name" value="aa-tRNA-synth_I_CS"/>
</dbReference>
<dbReference type="InterPro" id="IPR002300">
    <property type="entry name" value="aa-tRNA-synth_Ia"/>
</dbReference>
<dbReference type="InterPro" id="IPR033708">
    <property type="entry name" value="Anticodon_Ile_BEm"/>
</dbReference>
<dbReference type="InterPro" id="IPR002301">
    <property type="entry name" value="Ile-tRNA-ligase"/>
</dbReference>
<dbReference type="InterPro" id="IPR023585">
    <property type="entry name" value="Ile-tRNA-ligase_type1"/>
</dbReference>
<dbReference type="InterPro" id="IPR050081">
    <property type="entry name" value="Ile-tRNA_ligase"/>
</dbReference>
<dbReference type="InterPro" id="IPR013155">
    <property type="entry name" value="M/V/L/I-tRNA-synth_anticd-bd"/>
</dbReference>
<dbReference type="InterPro" id="IPR014729">
    <property type="entry name" value="Rossmann-like_a/b/a_fold"/>
</dbReference>
<dbReference type="InterPro" id="IPR009080">
    <property type="entry name" value="tRNAsynth_Ia_anticodon-bd"/>
</dbReference>
<dbReference type="InterPro" id="IPR009008">
    <property type="entry name" value="Val/Leu/Ile-tRNA-synth_edit"/>
</dbReference>
<dbReference type="InterPro" id="IPR010663">
    <property type="entry name" value="Znf_FPG/IleRS"/>
</dbReference>
<dbReference type="NCBIfam" id="TIGR00392">
    <property type="entry name" value="ileS"/>
    <property type="match status" value="1"/>
</dbReference>
<dbReference type="PANTHER" id="PTHR42765:SF1">
    <property type="entry name" value="ISOLEUCINE--TRNA LIGASE, MITOCHONDRIAL"/>
    <property type="match status" value="1"/>
</dbReference>
<dbReference type="PANTHER" id="PTHR42765">
    <property type="entry name" value="SOLEUCYL-TRNA SYNTHETASE"/>
    <property type="match status" value="1"/>
</dbReference>
<dbReference type="Pfam" id="PF08264">
    <property type="entry name" value="Anticodon_1"/>
    <property type="match status" value="1"/>
</dbReference>
<dbReference type="Pfam" id="PF00133">
    <property type="entry name" value="tRNA-synt_1"/>
    <property type="match status" value="1"/>
</dbReference>
<dbReference type="Pfam" id="PF06827">
    <property type="entry name" value="zf-FPG_IleRS"/>
    <property type="match status" value="1"/>
</dbReference>
<dbReference type="PRINTS" id="PR00984">
    <property type="entry name" value="TRNASYNTHILE"/>
</dbReference>
<dbReference type="SUPFAM" id="SSF47323">
    <property type="entry name" value="Anticodon-binding domain of a subclass of class I aminoacyl-tRNA synthetases"/>
    <property type="match status" value="1"/>
</dbReference>
<dbReference type="SUPFAM" id="SSF52374">
    <property type="entry name" value="Nucleotidylyl transferase"/>
    <property type="match status" value="1"/>
</dbReference>
<dbReference type="SUPFAM" id="SSF50677">
    <property type="entry name" value="ValRS/IleRS/LeuRS editing domain"/>
    <property type="match status" value="1"/>
</dbReference>
<dbReference type="PROSITE" id="PS00178">
    <property type="entry name" value="AA_TRNA_LIGASE_I"/>
    <property type="match status" value="1"/>
</dbReference>